<keyword id="KW-0227">DNA damage</keyword>
<keyword id="KW-0234">DNA repair</keyword>
<keyword id="KW-0255">Endonuclease</keyword>
<keyword id="KW-0378">Hydrolase</keyword>
<keyword id="KW-0479">Metal-binding</keyword>
<keyword id="KW-0540">Nuclease</keyword>
<keyword id="KW-1185">Reference proteome</keyword>
<keyword id="KW-0862">Zinc</keyword>
<protein>
    <recommendedName>
        <fullName evidence="1">Probable endonuclease 4</fullName>
        <ecNumber evidence="1">3.1.21.2</ecNumber>
    </recommendedName>
    <alternativeName>
        <fullName evidence="1">Endodeoxyribonuclease IV</fullName>
    </alternativeName>
    <alternativeName>
        <fullName evidence="1">Endonuclease IV</fullName>
    </alternativeName>
</protein>
<proteinExistence type="inferred from homology"/>
<accession>A9KNS9</accession>
<feature type="chain" id="PRO_1000076803" description="Probable endonuclease 4">
    <location>
        <begin position="1"/>
        <end position="300"/>
    </location>
</feature>
<feature type="binding site" evidence="1">
    <location>
        <position position="69"/>
    </location>
    <ligand>
        <name>Zn(2+)</name>
        <dbReference type="ChEBI" id="CHEBI:29105"/>
        <label>1</label>
    </ligand>
</feature>
<feature type="binding site" evidence="1">
    <location>
        <position position="110"/>
    </location>
    <ligand>
        <name>Zn(2+)</name>
        <dbReference type="ChEBI" id="CHEBI:29105"/>
        <label>1</label>
    </ligand>
</feature>
<feature type="binding site" evidence="1">
    <location>
        <position position="145"/>
    </location>
    <ligand>
        <name>Zn(2+)</name>
        <dbReference type="ChEBI" id="CHEBI:29105"/>
        <label>1</label>
    </ligand>
</feature>
<feature type="binding site" evidence="1">
    <location>
        <position position="145"/>
    </location>
    <ligand>
        <name>Zn(2+)</name>
        <dbReference type="ChEBI" id="CHEBI:29105"/>
        <label>2</label>
    </ligand>
</feature>
<feature type="binding site" evidence="1">
    <location>
        <position position="179"/>
    </location>
    <ligand>
        <name>Zn(2+)</name>
        <dbReference type="ChEBI" id="CHEBI:29105"/>
        <label>2</label>
    </ligand>
</feature>
<feature type="binding site" evidence="1">
    <location>
        <position position="182"/>
    </location>
    <ligand>
        <name>Zn(2+)</name>
        <dbReference type="ChEBI" id="CHEBI:29105"/>
        <label>3</label>
    </ligand>
</feature>
<feature type="binding site" evidence="1">
    <location>
        <position position="214"/>
    </location>
    <ligand>
        <name>Zn(2+)</name>
        <dbReference type="ChEBI" id="CHEBI:29105"/>
        <label>2</label>
    </ligand>
</feature>
<feature type="binding site" evidence="1">
    <location>
        <position position="227"/>
    </location>
    <ligand>
        <name>Zn(2+)</name>
        <dbReference type="ChEBI" id="CHEBI:29105"/>
        <label>3</label>
    </ligand>
</feature>
<feature type="binding site" evidence="1">
    <location>
        <position position="229"/>
    </location>
    <ligand>
        <name>Zn(2+)</name>
        <dbReference type="ChEBI" id="CHEBI:29105"/>
        <label>3</label>
    </ligand>
</feature>
<feature type="binding site" evidence="1">
    <location>
        <position position="259"/>
    </location>
    <ligand>
        <name>Zn(2+)</name>
        <dbReference type="ChEBI" id="CHEBI:29105"/>
        <label>2</label>
    </ligand>
</feature>
<dbReference type="EC" id="3.1.21.2" evidence="1"/>
<dbReference type="EMBL" id="CP000885">
    <property type="protein sequence ID" value="ABX41680.1"/>
    <property type="molecule type" value="Genomic_DNA"/>
</dbReference>
<dbReference type="RefSeq" id="WP_012199334.1">
    <property type="nucleotide sequence ID" value="NC_010001.1"/>
</dbReference>
<dbReference type="SMR" id="A9KNS9"/>
<dbReference type="STRING" id="357809.Cphy_1303"/>
<dbReference type="KEGG" id="cpy:Cphy_1303"/>
<dbReference type="eggNOG" id="COG0648">
    <property type="taxonomic scope" value="Bacteria"/>
</dbReference>
<dbReference type="HOGENOM" id="CLU_025885_4_1_9"/>
<dbReference type="OrthoDB" id="9805666at2"/>
<dbReference type="Proteomes" id="UP000000370">
    <property type="component" value="Chromosome"/>
</dbReference>
<dbReference type="GO" id="GO:0008833">
    <property type="term" value="F:deoxyribonuclease IV (phage-T4-induced) activity"/>
    <property type="evidence" value="ECO:0007669"/>
    <property type="project" value="UniProtKB-UniRule"/>
</dbReference>
<dbReference type="GO" id="GO:0003677">
    <property type="term" value="F:DNA binding"/>
    <property type="evidence" value="ECO:0007669"/>
    <property type="project" value="InterPro"/>
</dbReference>
<dbReference type="GO" id="GO:0003906">
    <property type="term" value="F:DNA-(apurinic or apyrimidinic site) endonuclease activity"/>
    <property type="evidence" value="ECO:0007669"/>
    <property type="project" value="TreeGrafter"/>
</dbReference>
<dbReference type="GO" id="GO:0008081">
    <property type="term" value="F:phosphoric diester hydrolase activity"/>
    <property type="evidence" value="ECO:0007669"/>
    <property type="project" value="TreeGrafter"/>
</dbReference>
<dbReference type="GO" id="GO:0008270">
    <property type="term" value="F:zinc ion binding"/>
    <property type="evidence" value="ECO:0007669"/>
    <property type="project" value="UniProtKB-UniRule"/>
</dbReference>
<dbReference type="GO" id="GO:0006284">
    <property type="term" value="P:base-excision repair"/>
    <property type="evidence" value="ECO:0007669"/>
    <property type="project" value="TreeGrafter"/>
</dbReference>
<dbReference type="CDD" id="cd00019">
    <property type="entry name" value="AP2Ec"/>
    <property type="match status" value="1"/>
</dbReference>
<dbReference type="FunFam" id="3.20.20.150:FF:000001">
    <property type="entry name" value="Probable endonuclease 4"/>
    <property type="match status" value="1"/>
</dbReference>
<dbReference type="Gene3D" id="3.20.20.150">
    <property type="entry name" value="Divalent-metal-dependent TIM barrel enzymes"/>
    <property type="match status" value="1"/>
</dbReference>
<dbReference type="HAMAP" id="MF_00152">
    <property type="entry name" value="Nfo"/>
    <property type="match status" value="1"/>
</dbReference>
<dbReference type="InterPro" id="IPR001719">
    <property type="entry name" value="AP_endonuc_2"/>
</dbReference>
<dbReference type="InterPro" id="IPR018246">
    <property type="entry name" value="AP_endonuc_F2_Zn_BS"/>
</dbReference>
<dbReference type="InterPro" id="IPR036237">
    <property type="entry name" value="Xyl_isomerase-like_sf"/>
</dbReference>
<dbReference type="InterPro" id="IPR013022">
    <property type="entry name" value="Xyl_isomerase-like_TIM-brl"/>
</dbReference>
<dbReference type="NCBIfam" id="TIGR00587">
    <property type="entry name" value="nfo"/>
    <property type="match status" value="1"/>
</dbReference>
<dbReference type="NCBIfam" id="NF002196">
    <property type="entry name" value="PRK01060.1-1"/>
    <property type="match status" value="1"/>
</dbReference>
<dbReference type="PANTHER" id="PTHR21445:SF0">
    <property type="entry name" value="APURINIC-APYRIMIDINIC ENDONUCLEASE"/>
    <property type="match status" value="1"/>
</dbReference>
<dbReference type="PANTHER" id="PTHR21445">
    <property type="entry name" value="ENDONUCLEASE IV ENDODEOXYRIBONUCLEASE IV"/>
    <property type="match status" value="1"/>
</dbReference>
<dbReference type="Pfam" id="PF01261">
    <property type="entry name" value="AP_endonuc_2"/>
    <property type="match status" value="1"/>
</dbReference>
<dbReference type="SMART" id="SM00518">
    <property type="entry name" value="AP2Ec"/>
    <property type="match status" value="1"/>
</dbReference>
<dbReference type="SUPFAM" id="SSF51658">
    <property type="entry name" value="Xylose isomerase-like"/>
    <property type="match status" value="1"/>
</dbReference>
<dbReference type="PROSITE" id="PS00729">
    <property type="entry name" value="AP_NUCLEASE_F2_1"/>
    <property type="match status" value="1"/>
</dbReference>
<dbReference type="PROSITE" id="PS00730">
    <property type="entry name" value="AP_NUCLEASE_F2_2"/>
    <property type="match status" value="1"/>
</dbReference>
<dbReference type="PROSITE" id="PS00731">
    <property type="entry name" value="AP_NUCLEASE_F2_3"/>
    <property type="match status" value="1"/>
</dbReference>
<dbReference type="PROSITE" id="PS51432">
    <property type="entry name" value="AP_NUCLEASE_F2_4"/>
    <property type="match status" value="1"/>
</dbReference>
<sequence length="300" mass="33833">MLKIGSHVGMSGKEAFFGSAKEAHSYDANTFMVYTGAPQNTRRKDISDLRLEEGFEFMKQHGISDIVIHAPYIINLGNSVNLDTYSLAVDFLAKEMERTKAFRSKYLVLHPGAHVGAGVDAGIKQIVQGLNEVLTRDTDLYIALETMAGKGSEIGRNFEELARIYDGVKYNDRLRVCFDTCHTNDAGYDVVNDFDGVIEQFDKLIGKEQIAVFHINDSKNDRGASKDRHENIGFGTLGFDAISYIVHHSDFIEVPKILETPYVSLPNEKEKSLPPYRYEIEMLRNSVFDPQILEKIQNNR</sequence>
<comment type="function">
    <text evidence="1">Endonuclease IV plays a role in DNA repair. It cleaves phosphodiester bonds at apurinic or apyrimidinic (AP) sites, generating a 3'-hydroxyl group and a 5'-terminal sugar phosphate.</text>
</comment>
<comment type="catalytic activity">
    <reaction evidence="1">
        <text>Endonucleolytic cleavage to 5'-phosphooligonucleotide end-products.</text>
        <dbReference type="EC" id="3.1.21.2"/>
    </reaction>
</comment>
<comment type="cofactor">
    <cofactor evidence="1">
        <name>Zn(2+)</name>
        <dbReference type="ChEBI" id="CHEBI:29105"/>
    </cofactor>
    <text evidence="1">Binds 3 Zn(2+) ions.</text>
</comment>
<comment type="similarity">
    <text evidence="1">Belongs to the AP endonuclease 2 family.</text>
</comment>
<reference key="1">
    <citation type="submission" date="2007-11" db="EMBL/GenBank/DDBJ databases">
        <title>Complete genome sequence of Clostridium phytofermentans ISDg.</title>
        <authorList>
            <person name="Leschine S.B."/>
            <person name="Warnick T.A."/>
            <person name="Blanchard J.L."/>
            <person name="Schnell D.J."/>
            <person name="Petit E.L."/>
            <person name="LaTouf W.G."/>
            <person name="Copeland A."/>
            <person name="Lucas S."/>
            <person name="Lapidus A."/>
            <person name="Barry K."/>
            <person name="Glavina del Rio T."/>
            <person name="Dalin E."/>
            <person name="Tice H."/>
            <person name="Pitluck S."/>
            <person name="Kiss H."/>
            <person name="Brettin T."/>
            <person name="Bruce D."/>
            <person name="Detter J.C."/>
            <person name="Han C."/>
            <person name="Kuske C."/>
            <person name="Schmutz J."/>
            <person name="Larimer F."/>
            <person name="Land M."/>
            <person name="Hauser L."/>
            <person name="Kyrpides N."/>
            <person name="Kim E.A."/>
            <person name="Richardson P."/>
        </authorList>
    </citation>
    <scope>NUCLEOTIDE SEQUENCE [LARGE SCALE GENOMIC DNA]</scope>
    <source>
        <strain>ATCC 700394 / DSM 18823 / ISDg</strain>
    </source>
</reference>
<name>END4_LACP7</name>
<evidence type="ECO:0000255" key="1">
    <source>
        <dbReference type="HAMAP-Rule" id="MF_00152"/>
    </source>
</evidence>
<gene>
    <name evidence="1" type="primary">nfo</name>
    <name type="ordered locus">Cphy_1303</name>
</gene>
<organism>
    <name type="scientific">Lachnoclostridium phytofermentans (strain ATCC 700394 / DSM 18823 / ISDg)</name>
    <name type="common">Clostridium phytofermentans</name>
    <dbReference type="NCBI Taxonomy" id="357809"/>
    <lineage>
        <taxon>Bacteria</taxon>
        <taxon>Bacillati</taxon>
        <taxon>Bacillota</taxon>
        <taxon>Clostridia</taxon>
        <taxon>Lachnospirales</taxon>
        <taxon>Lachnospiraceae</taxon>
    </lineage>
</organism>